<keyword id="KW-0067">ATP-binding</keyword>
<keyword id="KW-0119">Carbohydrate metabolism</keyword>
<keyword id="KW-0320">Glycogen biosynthesis</keyword>
<keyword id="KW-0321">Glycogen metabolism</keyword>
<keyword id="KW-0547">Nucleotide-binding</keyword>
<keyword id="KW-0548">Nucleotidyltransferase</keyword>
<keyword id="KW-1185">Reference proteome</keyword>
<keyword id="KW-0808">Transferase</keyword>
<accession>B9L1J9</accession>
<protein>
    <recommendedName>
        <fullName evidence="1">Glucose-1-phosphate adenylyltransferase</fullName>
        <ecNumber evidence="1">2.7.7.27</ecNumber>
    </recommendedName>
    <alternativeName>
        <fullName evidence="1">ADP-glucose pyrophosphorylase</fullName>
        <shortName evidence="1">ADPGlc PPase</shortName>
    </alternativeName>
    <alternativeName>
        <fullName evidence="1">ADP-glucose synthase</fullName>
    </alternativeName>
</protein>
<proteinExistence type="inferred from homology"/>
<comment type="function">
    <text evidence="1">Involved in the biosynthesis of ADP-glucose, a building block required for the elongation reactions to produce glycogen. Catalyzes the reaction between ATP and alpha-D-glucose 1-phosphate (G1P) to produce pyrophosphate and ADP-Glc.</text>
</comment>
<comment type="catalytic activity">
    <reaction evidence="1">
        <text>alpha-D-glucose 1-phosphate + ATP + H(+) = ADP-alpha-D-glucose + diphosphate</text>
        <dbReference type="Rhea" id="RHEA:12120"/>
        <dbReference type="ChEBI" id="CHEBI:15378"/>
        <dbReference type="ChEBI" id="CHEBI:30616"/>
        <dbReference type="ChEBI" id="CHEBI:33019"/>
        <dbReference type="ChEBI" id="CHEBI:57498"/>
        <dbReference type="ChEBI" id="CHEBI:58601"/>
        <dbReference type="EC" id="2.7.7.27"/>
    </reaction>
</comment>
<comment type="pathway">
    <text evidence="1">Glycan biosynthesis; glycogen biosynthesis.</text>
</comment>
<comment type="subunit">
    <text evidence="1">Homotetramer.</text>
</comment>
<comment type="similarity">
    <text evidence="1">Belongs to the bacterial/plant glucose-1-phosphate adenylyltransferase family.</text>
</comment>
<organism>
    <name type="scientific">Thermomicrobium roseum (strain ATCC 27502 / DSM 5159 / P-2)</name>
    <dbReference type="NCBI Taxonomy" id="309801"/>
    <lineage>
        <taxon>Bacteria</taxon>
        <taxon>Pseudomonadati</taxon>
        <taxon>Thermomicrobiota</taxon>
        <taxon>Thermomicrobia</taxon>
        <taxon>Thermomicrobiales</taxon>
        <taxon>Thermomicrobiaceae</taxon>
        <taxon>Thermomicrobium</taxon>
    </lineage>
</organism>
<sequence>MSDVAVMILAGGQGERLSILSRQRAKPAVPFGGKYRIIDFALSNCVNSGLYDVAVLTQYRPHSLNEHIGHGRPWDLDRERNGGVVILQPYLGRSTSGWYRGTADAVYHNLFYITRRPYRDVLILAGDHVYAMDYRPMIAQHRERCADVTIAVQPVDWREASRFGVVIVAEDGWVVDFEEKPERPRSNLASMGIYLFRRNLLLDLFTRDHPDAPEFIDFGRDVIPYLIRTARVATYRFDGYWQDVGTVQSYWEANMALLEDEPKLNLYDPNWRIHTRSEERPPAKILEGATVIRSLLSNGCIVEGATVIRSILSPGVIVKAGAVVRDSIVMTDSVIGPGAVVDRCIIDKHVTIGANAYLGWGDDNSPNWLEPSRLNTGITLVGRNAVVPPGVRIGRNVLIGPEVKESDFPGAVVPSGETVNPIATVVWS</sequence>
<name>GLGC_THERP</name>
<dbReference type="EC" id="2.7.7.27" evidence="1"/>
<dbReference type="EMBL" id="CP001275">
    <property type="protein sequence ID" value="ACM05710.1"/>
    <property type="molecule type" value="Genomic_DNA"/>
</dbReference>
<dbReference type="RefSeq" id="WP_015922210.1">
    <property type="nucleotide sequence ID" value="NC_011959.1"/>
</dbReference>
<dbReference type="SMR" id="B9L1J9"/>
<dbReference type="STRING" id="309801.trd_1259"/>
<dbReference type="KEGG" id="tro:trd_1259"/>
<dbReference type="eggNOG" id="COG0448">
    <property type="taxonomic scope" value="Bacteria"/>
</dbReference>
<dbReference type="HOGENOM" id="CLU_029499_14_0_0"/>
<dbReference type="OrthoDB" id="9801810at2"/>
<dbReference type="UniPathway" id="UPA00164"/>
<dbReference type="Proteomes" id="UP000000447">
    <property type="component" value="Chromosome"/>
</dbReference>
<dbReference type="GO" id="GO:0005524">
    <property type="term" value="F:ATP binding"/>
    <property type="evidence" value="ECO:0007669"/>
    <property type="project" value="UniProtKB-KW"/>
</dbReference>
<dbReference type="GO" id="GO:0008878">
    <property type="term" value="F:glucose-1-phosphate adenylyltransferase activity"/>
    <property type="evidence" value="ECO:0007669"/>
    <property type="project" value="UniProtKB-UniRule"/>
</dbReference>
<dbReference type="GO" id="GO:0005978">
    <property type="term" value="P:glycogen biosynthetic process"/>
    <property type="evidence" value="ECO:0007669"/>
    <property type="project" value="UniProtKB-UniRule"/>
</dbReference>
<dbReference type="CDD" id="cd02508">
    <property type="entry name" value="ADP_Glucose_PP"/>
    <property type="match status" value="1"/>
</dbReference>
<dbReference type="CDD" id="cd04651">
    <property type="entry name" value="LbH_G1P_AT_C"/>
    <property type="match status" value="1"/>
</dbReference>
<dbReference type="Gene3D" id="2.160.10.10">
    <property type="entry name" value="Hexapeptide repeat proteins"/>
    <property type="match status" value="1"/>
</dbReference>
<dbReference type="Gene3D" id="3.90.550.10">
    <property type="entry name" value="Spore Coat Polysaccharide Biosynthesis Protein SpsA, Chain A"/>
    <property type="match status" value="1"/>
</dbReference>
<dbReference type="HAMAP" id="MF_00624">
    <property type="entry name" value="GlgC"/>
    <property type="match status" value="1"/>
</dbReference>
<dbReference type="InterPro" id="IPR011831">
    <property type="entry name" value="ADP-Glc_PPase"/>
</dbReference>
<dbReference type="InterPro" id="IPR005836">
    <property type="entry name" value="ADP_Glu_pyroP_CS"/>
</dbReference>
<dbReference type="InterPro" id="IPR023049">
    <property type="entry name" value="GlgC_bac"/>
</dbReference>
<dbReference type="InterPro" id="IPR056818">
    <property type="entry name" value="GlmU/GlgC-like_hexapep"/>
</dbReference>
<dbReference type="InterPro" id="IPR005835">
    <property type="entry name" value="NTP_transferase_dom"/>
</dbReference>
<dbReference type="InterPro" id="IPR029044">
    <property type="entry name" value="Nucleotide-diphossugar_trans"/>
</dbReference>
<dbReference type="InterPro" id="IPR011004">
    <property type="entry name" value="Trimer_LpxA-like_sf"/>
</dbReference>
<dbReference type="NCBIfam" id="TIGR02091">
    <property type="entry name" value="glgC"/>
    <property type="match status" value="1"/>
</dbReference>
<dbReference type="NCBIfam" id="NF003670">
    <property type="entry name" value="PRK05293.1"/>
    <property type="match status" value="1"/>
</dbReference>
<dbReference type="PANTHER" id="PTHR43523:SF2">
    <property type="entry name" value="GLUCOSE-1-PHOSPHATE ADENYLYLTRANSFERASE"/>
    <property type="match status" value="1"/>
</dbReference>
<dbReference type="PANTHER" id="PTHR43523">
    <property type="entry name" value="GLUCOSE-1-PHOSPHATE ADENYLYLTRANSFERASE-RELATED"/>
    <property type="match status" value="1"/>
</dbReference>
<dbReference type="Pfam" id="PF24894">
    <property type="entry name" value="Hexapep_GlmU"/>
    <property type="match status" value="1"/>
</dbReference>
<dbReference type="Pfam" id="PF00483">
    <property type="entry name" value="NTP_transferase"/>
    <property type="match status" value="1"/>
</dbReference>
<dbReference type="SUPFAM" id="SSF53448">
    <property type="entry name" value="Nucleotide-diphospho-sugar transferases"/>
    <property type="match status" value="1"/>
</dbReference>
<dbReference type="SUPFAM" id="SSF51161">
    <property type="entry name" value="Trimeric LpxA-like enzymes"/>
    <property type="match status" value="1"/>
</dbReference>
<dbReference type="PROSITE" id="PS00809">
    <property type="entry name" value="ADP_GLC_PYROPHOSPH_2"/>
    <property type="match status" value="1"/>
</dbReference>
<feature type="chain" id="PRO_1000147242" description="Glucose-1-phosphate adenylyltransferase">
    <location>
        <begin position="1"/>
        <end position="428"/>
    </location>
</feature>
<feature type="binding site" evidence="1">
    <location>
        <position position="99"/>
    </location>
    <ligand>
        <name>alpha-D-glucose 1-phosphate</name>
        <dbReference type="ChEBI" id="CHEBI:58601"/>
    </ligand>
</feature>
<feature type="binding site" evidence="1">
    <location>
        <position position="164"/>
    </location>
    <ligand>
        <name>alpha-D-glucose 1-phosphate</name>
        <dbReference type="ChEBI" id="CHEBI:58601"/>
    </ligand>
</feature>
<feature type="binding site" evidence="1">
    <location>
        <begin position="179"/>
        <end position="180"/>
    </location>
    <ligand>
        <name>alpha-D-glucose 1-phosphate</name>
        <dbReference type="ChEBI" id="CHEBI:58601"/>
    </ligand>
</feature>
<feature type="binding site" evidence="1">
    <location>
        <position position="190"/>
    </location>
    <ligand>
        <name>alpha-D-glucose 1-phosphate</name>
        <dbReference type="ChEBI" id="CHEBI:58601"/>
    </ligand>
</feature>
<reference key="1">
    <citation type="journal article" date="2009" name="PLoS ONE">
        <title>Complete genome sequence of the aerobic CO-oxidizing thermophile Thermomicrobium roseum.</title>
        <authorList>
            <person name="Wu D."/>
            <person name="Raymond J."/>
            <person name="Wu M."/>
            <person name="Chatterji S."/>
            <person name="Ren Q."/>
            <person name="Graham J.E."/>
            <person name="Bryant D.A."/>
            <person name="Robb F."/>
            <person name="Colman A."/>
            <person name="Tallon L.J."/>
            <person name="Badger J.H."/>
            <person name="Madupu R."/>
            <person name="Ward N.L."/>
            <person name="Eisen J.A."/>
        </authorList>
    </citation>
    <scope>NUCLEOTIDE SEQUENCE [LARGE SCALE GENOMIC DNA]</scope>
    <source>
        <strain>ATCC 27502 / DSM 5159 / P-2</strain>
    </source>
</reference>
<evidence type="ECO:0000255" key="1">
    <source>
        <dbReference type="HAMAP-Rule" id="MF_00624"/>
    </source>
</evidence>
<gene>
    <name evidence="1" type="primary">glgC</name>
    <name type="ordered locus">trd_1259</name>
</gene>